<feature type="transit peptide" description="Chloroplast" evidence="6">
    <location>
        <begin position="1"/>
        <end position="44"/>
    </location>
</feature>
<feature type="chain" id="PRO_0000430785" description="Furostanol glycoside 26-O-beta-glucosidase" evidence="6">
    <location>
        <begin position="45"/>
        <end position="562"/>
    </location>
</feature>
<feature type="active site" description="Proton donor" evidence="3">
    <location>
        <position position="260"/>
    </location>
</feature>
<feature type="active site" description="Nucleophile" evidence="3">
    <location>
        <position position="472"/>
    </location>
</feature>
<feature type="binding site" evidence="4">
    <location>
        <position position="110"/>
    </location>
    <ligand>
        <name>a beta-D-glucoside</name>
        <dbReference type="ChEBI" id="CHEBI:22798"/>
    </ligand>
</feature>
<feature type="binding site" evidence="4">
    <location>
        <position position="214"/>
    </location>
    <ligand>
        <name>a beta-D-glucoside</name>
        <dbReference type="ChEBI" id="CHEBI:22798"/>
    </ligand>
</feature>
<feature type="binding site" evidence="4">
    <location>
        <begin position="259"/>
        <end position="260"/>
    </location>
    <ligand>
        <name>a beta-D-glucoside</name>
        <dbReference type="ChEBI" id="CHEBI:22798"/>
    </ligand>
</feature>
<feature type="binding site" evidence="4">
    <location>
        <position position="401"/>
    </location>
    <ligand>
        <name>a beta-D-glucoside</name>
        <dbReference type="ChEBI" id="CHEBI:22798"/>
    </ligand>
</feature>
<feature type="binding site" evidence="5">
    <location>
        <position position="472"/>
    </location>
    <ligand>
        <name>a beta-D-glucoside</name>
        <dbReference type="ChEBI" id="CHEBI:22798"/>
    </ligand>
</feature>
<feature type="binding site" evidence="4">
    <location>
        <position position="518"/>
    </location>
    <ligand>
        <name>a beta-D-glucoside</name>
        <dbReference type="ChEBI" id="CHEBI:22798"/>
    </ligand>
</feature>
<feature type="binding site" evidence="4">
    <location>
        <begin position="525"/>
        <end position="526"/>
    </location>
    <ligand>
        <name>a beta-D-glucoside</name>
        <dbReference type="ChEBI" id="CHEBI:22798"/>
    </ligand>
</feature>
<feature type="binding site" evidence="2">
    <location>
        <position position="534"/>
    </location>
    <ligand>
        <name>a beta-D-glucoside</name>
        <dbReference type="ChEBI" id="CHEBI:22798"/>
    </ligand>
</feature>
<feature type="disulfide bond" evidence="1">
    <location>
        <begin position="279"/>
        <end position="285"/>
    </location>
</feature>
<dbReference type="EC" id="3.2.1.186" evidence="8 9"/>
<dbReference type="EMBL" id="D83177">
    <property type="protein sequence ID" value="BAA11831.1"/>
    <property type="molecule type" value="mRNA"/>
</dbReference>
<dbReference type="PIR" id="S78099">
    <property type="entry name" value="S78099"/>
</dbReference>
<dbReference type="SMR" id="Q42707"/>
<dbReference type="IntAct" id="Q42707">
    <property type="interactions" value="1"/>
</dbReference>
<dbReference type="CAZy" id="GH1">
    <property type="family name" value="Glycoside Hydrolase Family 1"/>
</dbReference>
<dbReference type="KEGG" id="ag:BAA11831"/>
<dbReference type="BRENDA" id="3.2.1.186">
    <property type="organism ID" value="13331"/>
</dbReference>
<dbReference type="GO" id="GO:0009507">
    <property type="term" value="C:chloroplast"/>
    <property type="evidence" value="ECO:0007669"/>
    <property type="project" value="UniProtKB-SubCell"/>
</dbReference>
<dbReference type="GO" id="GO:0008422">
    <property type="term" value="F:beta-glucosidase activity"/>
    <property type="evidence" value="ECO:0007669"/>
    <property type="project" value="TreeGrafter"/>
</dbReference>
<dbReference type="GO" id="GO:0005975">
    <property type="term" value="P:carbohydrate metabolic process"/>
    <property type="evidence" value="ECO:0007669"/>
    <property type="project" value="InterPro"/>
</dbReference>
<dbReference type="FunFam" id="3.20.20.80:FF:000022">
    <property type="entry name" value="Beta-glucosidase 11"/>
    <property type="match status" value="1"/>
</dbReference>
<dbReference type="Gene3D" id="3.20.20.80">
    <property type="entry name" value="Glycosidases"/>
    <property type="match status" value="1"/>
</dbReference>
<dbReference type="InterPro" id="IPR001360">
    <property type="entry name" value="Glyco_hydro_1"/>
</dbReference>
<dbReference type="InterPro" id="IPR033132">
    <property type="entry name" value="Glyco_hydro_1_N_CS"/>
</dbReference>
<dbReference type="InterPro" id="IPR017853">
    <property type="entry name" value="Glycoside_hydrolase_SF"/>
</dbReference>
<dbReference type="PANTHER" id="PTHR10353">
    <property type="entry name" value="GLYCOSYL HYDROLASE"/>
    <property type="match status" value="1"/>
</dbReference>
<dbReference type="PANTHER" id="PTHR10353:SF137">
    <property type="entry name" value="MYROSINASE 3-RELATED"/>
    <property type="match status" value="1"/>
</dbReference>
<dbReference type="Pfam" id="PF00232">
    <property type="entry name" value="Glyco_hydro_1"/>
    <property type="match status" value="1"/>
</dbReference>
<dbReference type="PRINTS" id="PR00131">
    <property type="entry name" value="GLHYDRLASE1"/>
</dbReference>
<dbReference type="SUPFAM" id="SSF51445">
    <property type="entry name" value="(Trans)glycosidases"/>
    <property type="match status" value="1"/>
</dbReference>
<dbReference type="PROSITE" id="PS00653">
    <property type="entry name" value="GLYCOSYL_HYDROL_F1_2"/>
    <property type="match status" value="1"/>
</dbReference>
<reference key="1">
    <citation type="journal article" date="1996" name="FEBS Lett.">
        <title>Molecular cloning and bacterial expression of a cDNA encoding furostanol glycoside 26-O-beta-glucosidase of Costus speciosus.</title>
        <authorList>
            <person name="Inoue K."/>
            <person name="Shibuya M."/>
            <person name="Yamamoto K."/>
            <person name="Ebizuka Y."/>
        </authorList>
    </citation>
    <scope>NUCLEOTIDE SEQUENCE [MRNA]</scope>
    <scope>PARTIAL PROTEIN SEQUENCE</scope>
    <scope>CATALYTIC ACTIVITY</scope>
    <scope>FUNCTION</scope>
    <source>
        <tissue evidence="12">Leaf</tissue>
    </source>
</reference>
<reference key="2">
    <citation type="journal article" date="1996" name="FEBS Lett.">
        <title>Purification and characterization of furostanol glycoside 26-O-beta-glucosidase from Costus speciosus rhizomes.</title>
        <authorList>
            <person name="Inoue K."/>
            <person name="Ebizuka Y."/>
        </authorList>
    </citation>
    <scope>PARTIAL PROTEIN SEQUENCE</scope>
    <scope>FUNCTION</scope>
    <scope>CATALYTIC ACTIVITY</scope>
    <scope>BIOPHYSICOCHEMICAL PROPERTIES</scope>
    <scope>ACTIVITY REGULATION</scope>
    <scope>SUBUNIT</scope>
</reference>
<proteinExistence type="evidence at protein level"/>
<organism evidence="12">
    <name type="scientific">Hellenia speciosa</name>
    <name type="common">Crepe ginger</name>
    <name type="synonym">Cheilocostus speciosus</name>
    <dbReference type="NCBI Taxonomy" id="49577"/>
    <lineage>
        <taxon>Eukaryota</taxon>
        <taxon>Viridiplantae</taxon>
        <taxon>Streptophyta</taxon>
        <taxon>Embryophyta</taxon>
        <taxon>Tracheophyta</taxon>
        <taxon>Spermatophyta</taxon>
        <taxon>Magnoliopsida</taxon>
        <taxon>Liliopsida</taxon>
        <taxon>Zingiberales</taxon>
        <taxon>Costaceae</taxon>
        <taxon>Hellenia</taxon>
    </lineage>
</organism>
<sequence>MAAQLGLPLVSCHRGASQAASSSAHLVPGASAIMQAGNRRQKMRAPALRDRVVFARVVPVDGSVGFAGSSTEQETAVESATPTAVPSKVVLGRSSFPRGFIFGAASAAYQVEGAWNEGGRGPSIWDTFTHDHPEKIADHSNGDKATDSYKKYKEDVKLLKDLGLDSYRFSISWSRILPKGTLQGGINQEGIQYYNDLINELLKNGIRPMVTLFHWDVPQALEDSYKGFRSSEIVNDFKDYADICFKEFGDRVKHWITLNEPWSLSTMGYAFGRHAPGRCSTWYGCPAGDSANEPYEVTHNLLLAHANAVKIYRDNYKATQNGEIGITLNSLWYEPYSKSHEDVEAATRALDFMFGWYMDPLVNGDYPFIMRALVRDRLPFFTHAESELIKGSYDFIGINYYTSNYAQHAPVTEDHTPDNSYFDSYVNQSGEKNGVPIGPLQGSWIYFYPRGLKELLLYVKRRYCNPKIYITENGTAEVEKEKGVPLHDPERKEYLTYHLAQVLQAIREGVRVKGHFTWALTDNFEWDKGYTERFGLIYIDYDKDFNRQPKDSTKWFSKFLRT</sequence>
<accession>Q42707</accession>
<comment type="function">
    <text evidence="8 9">Beta-glucosidase involved in saponin metabolism. Highly specific for the cleavage of C-26-bound glucose moiety of furostanol glycosides such as protogracillin and protodioscin. No activity with nuatigenin glycoside. Convers furostanol glycosides to spirostanol glycosides.</text>
</comment>
<comment type="catalytic activity">
    <reaction evidence="8 9">
        <text>protodioscin + H2O = 26-deglucoprotodioscin + D-glucose</text>
        <dbReference type="Rhea" id="RHEA:37895"/>
        <dbReference type="ChEBI" id="CHEBI:4167"/>
        <dbReference type="ChEBI" id="CHEBI:8588"/>
        <dbReference type="ChEBI" id="CHEBI:15377"/>
        <dbReference type="ChEBI" id="CHEBI:74026"/>
        <dbReference type="EC" id="3.2.1.186"/>
    </reaction>
</comment>
<comment type="activity regulation">
    <text evidence="8">Partially inhibited by glucono-1,5-lactone, conduritol beta-epoxide and diosgenin, but not by beta-sitosterol or cholesterol.</text>
</comment>
<comment type="biophysicochemical properties">
    <kinetics>
        <KM evidence="8">50 uM for protogracillin</KM>
    </kinetics>
    <phDependence>
        <text evidence="8">Optimum pH is 5.0-5.5.</text>
    </phDependence>
</comment>
<comment type="subunit">
    <text evidence="8">Heterodimer. The N-terminus of the larger subunit is blocked and the smaller subunit might be derived from the larger one.</text>
</comment>
<comment type="subcellular location">
    <subcellularLocation>
        <location evidence="6">Plastid</location>
        <location evidence="6">Chloroplast</location>
    </subcellularLocation>
</comment>
<comment type="miscellaneous">
    <text evidence="10">Enzymatic conversion of furostanol glycosides to spirostanol glycosides proceeds only after plants are harvested. Under normal physiological conditions, the enzyme and its substrate might be compartmented spatially and/or chemically.</text>
</comment>
<comment type="similarity">
    <text evidence="7">Belongs to the glycosyl hydrolase 1 family.</text>
</comment>
<keyword id="KW-0150">Chloroplast</keyword>
<keyword id="KW-0903">Direct protein sequencing</keyword>
<keyword id="KW-1015">Disulfide bond</keyword>
<keyword id="KW-0326">Glycosidase</keyword>
<keyword id="KW-0378">Hydrolase</keyword>
<keyword id="KW-0934">Plastid</keyword>
<keyword id="KW-0809">Transit peptide</keyword>
<name>F26G_HELSP</name>
<protein>
    <recommendedName>
        <fullName evidence="11">Furostanol glycoside 26-O-beta-glucosidase</fullName>
        <shortName evidence="11">CsF26G</shortName>
        <ecNumber evidence="8 9">3.2.1.186</ecNumber>
    </recommendedName>
    <alternativeName>
        <fullName>Protodioscin 26-O-beta-D-glucosidase</fullName>
    </alternativeName>
</protein>
<gene>
    <name evidence="10" type="primary">F26G</name>
</gene>
<evidence type="ECO:0000250" key="1">
    <source>
        <dbReference type="UniProtKB" id="P26205"/>
    </source>
</evidence>
<evidence type="ECO:0000250" key="2">
    <source>
        <dbReference type="UniProtKB" id="Q1XH05"/>
    </source>
</evidence>
<evidence type="ECO:0000250" key="3">
    <source>
        <dbReference type="UniProtKB" id="Q25BW5"/>
    </source>
</evidence>
<evidence type="ECO:0000250" key="4">
    <source>
        <dbReference type="UniProtKB" id="Q7XSK0"/>
    </source>
</evidence>
<evidence type="ECO:0000250" key="5">
    <source>
        <dbReference type="UniProtKB" id="Q9SPP9"/>
    </source>
</evidence>
<evidence type="ECO:0000255" key="6"/>
<evidence type="ECO:0000255" key="7">
    <source>
        <dbReference type="RuleBase" id="RU003690"/>
    </source>
</evidence>
<evidence type="ECO:0000269" key="8">
    <source>
    </source>
</evidence>
<evidence type="ECO:0000269" key="9">
    <source>
    </source>
</evidence>
<evidence type="ECO:0000303" key="10">
    <source>
    </source>
</evidence>
<evidence type="ECO:0000303" key="11">
    <source>
    </source>
</evidence>
<evidence type="ECO:0000312" key="12">
    <source>
        <dbReference type="EMBL" id="BAA11831.1"/>
    </source>
</evidence>